<dbReference type="EMBL" id="U50712">
    <property type="protein sequence ID" value="AAB50053.1"/>
    <property type="molecule type" value="mRNA"/>
</dbReference>
<dbReference type="EMBL" id="U66670">
    <property type="protein sequence ID" value="AAB49424.1"/>
    <property type="molecule type" value="mRNA"/>
</dbReference>
<dbReference type="EMBL" id="AF065934">
    <property type="protein sequence ID" value="AAF15384.1"/>
    <property type="molecule type" value="mRNA"/>
</dbReference>
<dbReference type="EMBL" id="AF065935">
    <property type="protein sequence ID" value="AAF15385.1"/>
    <property type="molecule type" value="mRNA"/>
</dbReference>
<dbReference type="EMBL" id="AF065936">
    <property type="protein sequence ID" value="AAF15386.1"/>
    <property type="molecule type" value="mRNA"/>
</dbReference>
<dbReference type="EMBL" id="AF065937">
    <property type="protein sequence ID" value="AAF15387.1"/>
    <property type="molecule type" value="mRNA"/>
</dbReference>
<dbReference type="EMBL" id="AF065938">
    <property type="protein sequence ID" value="AAF15388.1"/>
    <property type="molecule type" value="mRNA"/>
</dbReference>
<dbReference type="EMBL" id="BC027520">
    <property type="protein sequence ID" value="AAH27520.1"/>
    <property type="molecule type" value="mRNA"/>
</dbReference>
<dbReference type="CCDS" id="CCDS36247.1"/>
<dbReference type="RefSeq" id="NP_035461.2">
    <property type="nucleotide sequence ID" value="NM_011331.3"/>
</dbReference>
<dbReference type="SMR" id="Q62401"/>
<dbReference type="FunCoup" id="Q62401">
    <property type="interactions" value="1036"/>
</dbReference>
<dbReference type="STRING" id="10090.ENSMUSP00000000194"/>
<dbReference type="PaxDb" id="10090-ENSMUSP00000000194"/>
<dbReference type="PeptideAtlas" id="Q62401"/>
<dbReference type="DNASU" id="20293"/>
<dbReference type="Ensembl" id="ENSMUST00000000194.4">
    <property type="protein sequence ID" value="ENSMUSP00000000194.4"/>
    <property type="gene ID" value="ENSMUSG00000035352.4"/>
</dbReference>
<dbReference type="GeneID" id="20293"/>
<dbReference type="KEGG" id="mmu:20293"/>
<dbReference type="UCSC" id="uc007kms.1">
    <property type="organism name" value="mouse"/>
</dbReference>
<dbReference type="AGR" id="MGI:108224"/>
<dbReference type="CTD" id="20293"/>
<dbReference type="MGI" id="MGI:108224">
    <property type="gene designation" value="Ccl12"/>
</dbReference>
<dbReference type="VEuPathDB" id="HostDB:ENSMUSG00000035352"/>
<dbReference type="eggNOG" id="ENOG502S6ZP">
    <property type="taxonomic scope" value="Eukaryota"/>
</dbReference>
<dbReference type="GeneTree" id="ENSGT01130000278316"/>
<dbReference type="HOGENOM" id="CLU_141716_1_0_1"/>
<dbReference type="InParanoid" id="Q62401"/>
<dbReference type="OMA" id="PNQKWVK"/>
<dbReference type="OrthoDB" id="9930747at2759"/>
<dbReference type="PhylomeDB" id="Q62401"/>
<dbReference type="TreeFam" id="TF334888"/>
<dbReference type="Reactome" id="R-MMU-380108">
    <property type="pathway name" value="Chemokine receptors bind chemokines"/>
</dbReference>
<dbReference type="BioGRID-ORCS" id="20293">
    <property type="hits" value="0 hits in 63 CRISPR screens"/>
</dbReference>
<dbReference type="PRO" id="PR:Q62401"/>
<dbReference type="Proteomes" id="UP000000589">
    <property type="component" value="Chromosome 11"/>
</dbReference>
<dbReference type="RNAct" id="Q62401">
    <property type="molecule type" value="protein"/>
</dbReference>
<dbReference type="Bgee" id="ENSMUSG00000035352">
    <property type="expression patterns" value="Expressed in peripheral lymph node and 88 other cell types or tissues"/>
</dbReference>
<dbReference type="ExpressionAtlas" id="Q62401">
    <property type="expression patterns" value="baseline and differential"/>
</dbReference>
<dbReference type="GO" id="GO:0005615">
    <property type="term" value="C:extracellular space"/>
    <property type="evidence" value="ECO:0007669"/>
    <property type="project" value="UniProtKB-KW"/>
</dbReference>
<dbReference type="GO" id="GO:0031727">
    <property type="term" value="F:CCR2 chemokine receptor binding"/>
    <property type="evidence" value="ECO:0000353"/>
    <property type="project" value="BHF-UCL"/>
</dbReference>
<dbReference type="GO" id="GO:0008009">
    <property type="term" value="F:chemokine activity"/>
    <property type="evidence" value="ECO:0007669"/>
    <property type="project" value="InterPro"/>
</dbReference>
<dbReference type="GO" id="GO:0001525">
    <property type="term" value="P:angiogenesis"/>
    <property type="evidence" value="ECO:0000314"/>
    <property type="project" value="BHF-UCL"/>
</dbReference>
<dbReference type="GO" id="GO:0006955">
    <property type="term" value="P:immune response"/>
    <property type="evidence" value="ECO:0007669"/>
    <property type="project" value="InterPro"/>
</dbReference>
<dbReference type="GO" id="GO:0006954">
    <property type="term" value="P:inflammatory response"/>
    <property type="evidence" value="ECO:0000314"/>
    <property type="project" value="BHF-UCL"/>
</dbReference>
<dbReference type="GO" id="GO:0002548">
    <property type="term" value="P:monocyte chemotaxis"/>
    <property type="evidence" value="ECO:0000314"/>
    <property type="project" value="BHF-UCL"/>
</dbReference>
<dbReference type="CDD" id="cd00272">
    <property type="entry name" value="Chemokine_CC"/>
    <property type="match status" value="1"/>
</dbReference>
<dbReference type="FunFam" id="2.40.50.40:FF:000002">
    <property type="entry name" value="C-C motif chemokine"/>
    <property type="match status" value="1"/>
</dbReference>
<dbReference type="Gene3D" id="2.40.50.40">
    <property type="match status" value="1"/>
</dbReference>
<dbReference type="InterPro" id="IPR039809">
    <property type="entry name" value="Chemokine_b/g/d"/>
</dbReference>
<dbReference type="InterPro" id="IPR000827">
    <property type="entry name" value="Chemokine_CC_CS"/>
</dbReference>
<dbReference type="InterPro" id="IPR001811">
    <property type="entry name" value="Chemokine_IL8-like_dom"/>
</dbReference>
<dbReference type="InterPro" id="IPR036048">
    <property type="entry name" value="Interleukin_8-like_sf"/>
</dbReference>
<dbReference type="PANTHER" id="PTHR12015:SF98">
    <property type="entry name" value="C-C MOTIF CHEMOKINE 2"/>
    <property type="match status" value="1"/>
</dbReference>
<dbReference type="PANTHER" id="PTHR12015">
    <property type="entry name" value="SMALL INDUCIBLE CYTOKINE A"/>
    <property type="match status" value="1"/>
</dbReference>
<dbReference type="Pfam" id="PF00048">
    <property type="entry name" value="IL8"/>
    <property type="match status" value="1"/>
</dbReference>
<dbReference type="SMART" id="SM00199">
    <property type="entry name" value="SCY"/>
    <property type="match status" value="1"/>
</dbReference>
<dbReference type="SUPFAM" id="SSF54117">
    <property type="entry name" value="Interleukin 8-like chemokines"/>
    <property type="match status" value="1"/>
</dbReference>
<dbReference type="PROSITE" id="PS00472">
    <property type="entry name" value="SMALL_CYTOKINES_CC"/>
    <property type="match status" value="1"/>
</dbReference>
<accession>Q62401</accession>
<accession>Q9QYD6</accession>
<sequence>MKISTLLCLLLIATTISPQVLAGPDAVSTPVTCCYNVVKQKIHVRKLKSYRRITSSQCPREAVIFRTILDKEICADPKEKWVKNSINHLDKTSQTFILEPSCLG</sequence>
<feature type="signal peptide" evidence="1">
    <location>
        <begin position="1"/>
        <end position="22"/>
    </location>
</feature>
<feature type="chain" id="PRO_0000005199" description="C-C motif chemokine 12">
    <location>
        <begin position="23"/>
        <end position="104"/>
    </location>
</feature>
<feature type="disulfide bond" evidence="1">
    <location>
        <begin position="33"/>
        <end position="58"/>
    </location>
</feature>
<feature type="disulfide bond" evidence="1">
    <location>
        <begin position="34"/>
        <end position="74"/>
    </location>
</feature>
<feature type="sequence variant" description="In strain: SJL/J." evidence="2">
    <original>QTFILEPSCLG</original>
    <variation>RT</variation>
    <location>
        <begin position="94"/>
        <end position="104"/>
    </location>
</feature>
<protein>
    <recommendedName>
        <fullName>C-C motif chemokine 12</fullName>
    </recommendedName>
    <alternativeName>
        <fullName>MCP-1-related chemokine</fullName>
    </alternativeName>
    <alternativeName>
        <fullName>Monocyte chemoattractant protein 5</fullName>
    </alternativeName>
    <alternativeName>
        <fullName>Monocyte chemotactic protein 5</fullName>
        <shortName>MCP-5</shortName>
    </alternativeName>
    <alternativeName>
        <fullName>Small-inducible cytokine A12</fullName>
    </alternativeName>
</protein>
<organism>
    <name type="scientific">Mus musculus</name>
    <name type="common">Mouse</name>
    <dbReference type="NCBI Taxonomy" id="10090"/>
    <lineage>
        <taxon>Eukaryota</taxon>
        <taxon>Metazoa</taxon>
        <taxon>Chordata</taxon>
        <taxon>Craniata</taxon>
        <taxon>Vertebrata</taxon>
        <taxon>Euteleostomi</taxon>
        <taxon>Mammalia</taxon>
        <taxon>Eutheria</taxon>
        <taxon>Euarchontoglires</taxon>
        <taxon>Glires</taxon>
        <taxon>Rodentia</taxon>
        <taxon>Myomorpha</taxon>
        <taxon>Muroidea</taxon>
        <taxon>Muridae</taxon>
        <taxon>Murinae</taxon>
        <taxon>Mus</taxon>
        <taxon>Mus</taxon>
    </lineage>
</organism>
<comment type="function">
    <text>Chemotactic factor that attracts eosinophils, monocytes, and lymphocytes but not neutrophils. Potent monocyte active chemokine that signals through CCR2. Involved in allergic inflammation and the host response to pathogens and may play a pivotal role during early stages of allergic lung inflammation.</text>
</comment>
<comment type="subunit">
    <text evidence="1">Homodimer.</text>
</comment>
<comment type="subcellular location">
    <subcellularLocation>
        <location>Secreted</location>
    </subcellularLocation>
</comment>
<comment type="tissue specificity">
    <text>Predominantly expressed in the lymph nodes and thymus. Also found in the salivary glands containing lymph nodes, breast, heart, lung, brain, small intestine, kidney and colon.</text>
</comment>
<comment type="induction">
    <text>By interferon gamma and lipopolysaccharides (LPS).</text>
</comment>
<comment type="polymorphism">
    <text evidence="2">The polymorphism in strain SJL/J may be associated with severity of clinical symptoms of experimental allergic encephalomyelitis, an animal model of multiple sclerosis, and susceptibility to the monophasic remitting/nonrelapsing form of the disease.</text>
</comment>
<comment type="similarity">
    <text evidence="3">Belongs to the intercrine beta (chemokine CC) family.</text>
</comment>
<proteinExistence type="evidence at transcript level"/>
<reference key="1">
    <citation type="journal article" date="1996" name="J. Exp. Med.">
        <title>Distinct expression and function of the novel mouse chemokine monocyte chemotactic protein-5 in lung allergic inflammation.</title>
        <authorList>
            <person name="Jia G.-Q."/>
            <person name="Gonzalo J.A."/>
            <person name="Lloyd C."/>
            <person name="Kremer L."/>
            <person name="Lu L."/>
            <person name="Martinez A.C."/>
            <person name="Wershil B.K."/>
            <person name="Gutierrez-Ramos J.-C."/>
        </authorList>
    </citation>
    <scope>NUCLEOTIDE SEQUENCE [MRNA]</scope>
</reference>
<reference key="2">
    <citation type="journal article" date="1997" name="J. Exp. Med.">
        <title>Murine monocyte chemoattractant protein (MCP)-5: a novel CC chemokine that is a structural and functional homologue of human MCP-1.</title>
        <authorList>
            <person name="Sarafi M.N."/>
            <person name="Garcia-Zepeda E.A."/>
            <person name="MacLean J.A."/>
            <person name="Charo I.F."/>
            <person name="Luster A.D."/>
        </authorList>
    </citation>
    <scope>NUCLEOTIDE SEQUENCE [MRNA]</scope>
</reference>
<reference key="3">
    <citation type="journal article" date="1999" name="J. Immunol.">
        <title>Sequence polymorphisms in the chemokines Scya1 (TCA-3), Scya2 (monocyte chemoattractant protein (MCP)-1), and Scya12 (MCP-5) are candidates for eae7, a locus controlling susceptibility to monophasic remitting/nonrelapsing experimental allergic encephalomyelitis.</title>
        <authorList>
            <person name="Teuscher C."/>
            <person name="Butterfield R.J."/>
            <person name="Ma R.Z."/>
            <person name="Zachary J.F."/>
            <person name="Doerge R.W."/>
            <person name="Blankenhorn E.P."/>
        </authorList>
    </citation>
    <scope>NUCLEOTIDE SEQUENCE [MRNA]</scope>
    <scope>POLYMORPHISM</scope>
    <scope>VARIANT 94-GLN--GLY-104 DELINS ARG-THR</scope>
    <source>
        <strain>B10.S/J</strain>
        <strain>BALB/cJ</strain>
        <strain>DBA/2J</strain>
        <strain>NOD/LtJ</strain>
        <strain>SJL/J</strain>
        <tissue>Spleen</tissue>
    </source>
</reference>
<reference key="4">
    <citation type="journal article" date="2004" name="Genome Res.">
        <title>The status, quality, and expansion of the NIH full-length cDNA project: the Mammalian Gene Collection (MGC).</title>
        <authorList>
            <consortium name="The MGC Project Team"/>
        </authorList>
    </citation>
    <scope>NUCLEOTIDE SEQUENCE [LARGE SCALE MRNA]</scope>
    <source>
        <tissue>Mammary gland</tissue>
    </source>
</reference>
<keyword id="KW-0145">Chemotaxis</keyword>
<keyword id="KW-0202">Cytokine</keyword>
<keyword id="KW-1015">Disulfide bond</keyword>
<keyword id="KW-0395">Inflammatory response</keyword>
<keyword id="KW-1185">Reference proteome</keyword>
<keyword id="KW-0964">Secreted</keyword>
<keyword id="KW-0732">Signal</keyword>
<gene>
    <name type="primary">Ccl12</name>
    <name type="synonym">Mcp5</name>
    <name type="synonym">Scya12</name>
</gene>
<evidence type="ECO:0000250" key="1"/>
<evidence type="ECO:0000269" key="2">
    <source>
    </source>
</evidence>
<evidence type="ECO:0000305" key="3"/>
<name>CCL12_MOUSE</name>